<accession>Q9KP93</accession>
<reference key="1">
    <citation type="journal article" date="2000" name="Nature">
        <title>DNA sequence of both chromosomes of the cholera pathogen Vibrio cholerae.</title>
        <authorList>
            <person name="Heidelberg J.F."/>
            <person name="Eisen J.A."/>
            <person name="Nelson W.C."/>
            <person name="Clayton R.A."/>
            <person name="Gwinn M.L."/>
            <person name="Dodson R.J."/>
            <person name="Haft D.H."/>
            <person name="Hickey E.K."/>
            <person name="Peterson J.D."/>
            <person name="Umayam L.A."/>
            <person name="Gill S.R."/>
            <person name="Nelson K.E."/>
            <person name="Read T.D."/>
            <person name="Tettelin H."/>
            <person name="Richardson D.L."/>
            <person name="Ermolaeva M.D."/>
            <person name="Vamathevan J.J."/>
            <person name="Bass S."/>
            <person name="Qin H."/>
            <person name="Dragoi I."/>
            <person name="Sellers P."/>
            <person name="McDonald L.A."/>
            <person name="Utterback T.R."/>
            <person name="Fleischmann R.D."/>
            <person name="Nierman W.C."/>
            <person name="White O."/>
            <person name="Salzberg S.L."/>
            <person name="Smith H.O."/>
            <person name="Colwell R.R."/>
            <person name="Mekalanos J.J."/>
            <person name="Venter J.C."/>
            <person name="Fraser C.M."/>
        </authorList>
    </citation>
    <scope>NUCLEOTIDE SEQUENCE [LARGE SCALE GENOMIC DNA]</scope>
    <source>
        <strain>ATCC 39315 / El Tor Inaba N16961</strain>
    </source>
</reference>
<comment type="function">
    <text evidence="1">Catalyzes the reversible conversion of ribose-5-phosphate to ribulose 5-phosphate.</text>
</comment>
<comment type="catalytic activity">
    <reaction evidence="1">
        <text>aldehydo-D-ribose 5-phosphate = D-ribulose 5-phosphate</text>
        <dbReference type="Rhea" id="RHEA:14657"/>
        <dbReference type="ChEBI" id="CHEBI:58121"/>
        <dbReference type="ChEBI" id="CHEBI:58273"/>
        <dbReference type="EC" id="5.3.1.6"/>
    </reaction>
</comment>
<comment type="pathway">
    <text evidence="1">Carbohydrate degradation; pentose phosphate pathway; D-ribose 5-phosphate from D-ribulose 5-phosphate (non-oxidative stage): step 1/1.</text>
</comment>
<comment type="subunit">
    <text evidence="1">Homodimer.</text>
</comment>
<comment type="similarity">
    <text evidence="1">Belongs to the ribose 5-phosphate isomerase family.</text>
</comment>
<dbReference type="EC" id="5.3.1.6" evidence="1"/>
<dbReference type="EMBL" id="AE003852">
    <property type="protein sequence ID" value="AAF95622.1"/>
    <property type="molecule type" value="Genomic_DNA"/>
</dbReference>
<dbReference type="PIR" id="B82072">
    <property type="entry name" value="B82072"/>
</dbReference>
<dbReference type="RefSeq" id="NP_232109.1">
    <property type="nucleotide sequence ID" value="NC_002505.1"/>
</dbReference>
<dbReference type="RefSeq" id="WP_000189749.1">
    <property type="nucleotide sequence ID" value="NZ_LT906614.1"/>
</dbReference>
<dbReference type="SMR" id="Q9KP93"/>
<dbReference type="STRING" id="243277.VC_2480"/>
<dbReference type="DNASU" id="2613022"/>
<dbReference type="EnsemblBacteria" id="AAF95622">
    <property type="protein sequence ID" value="AAF95622"/>
    <property type="gene ID" value="VC_2480"/>
</dbReference>
<dbReference type="GeneID" id="88783289"/>
<dbReference type="KEGG" id="vch:VC_2480"/>
<dbReference type="PATRIC" id="fig|243277.26.peg.2363"/>
<dbReference type="eggNOG" id="COG0120">
    <property type="taxonomic scope" value="Bacteria"/>
</dbReference>
<dbReference type="HOGENOM" id="CLU_056590_1_1_6"/>
<dbReference type="UniPathway" id="UPA00115">
    <property type="reaction ID" value="UER00412"/>
</dbReference>
<dbReference type="Proteomes" id="UP000000584">
    <property type="component" value="Chromosome 1"/>
</dbReference>
<dbReference type="GO" id="GO:0005829">
    <property type="term" value="C:cytosol"/>
    <property type="evidence" value="ECO:0000318"/>
    <property type="project" value="GO_Central"/>
</dbReference>
<dbReference type="GO" id="GO:0004751">
    <property type="term" value="F:ribose-5-phosphate isomerase activity"/>
    <property type="evidence" value="ECO:0000318"/>
    <property type="project" value="GO_Central"/>
</dbReference>
<dbReference type="GO" id="GO:0006014">
    <property type="term" value="P:D-ribose metabolic process"/>
    <property type="evidence" value="ECO:0000318"/>
    <property type="project" value="GO_Central"/>
</dbReference>
<dbReference type="GO" id="GO:0009052">
    <property type="term" value="P:pentose-phosphate shunt, non-oxidative branch"/>
    <property type="evidence" value="ECO:0000318"/>
    <property type="project" value="GO_Central"/>
</dbReference>
<dbReference type="CDD" id="cd01398">
    <property type="entry name" value="RPI_A"/>
    <property type="match status" value="1"/>
</dbReference>
<dbReference type="FunFam" id="3.30.70.260:FF:000004">
    <property type="entry name" value="Ribose-5-phosphate isomerase A"/>
    <property type="match status" value="1"/>
</dbReference>
<dbReference type="FunFam" id="3.40.50.1360:FF:000001">
    <property type="entry name" value="Ribose-5-phosphate isomerase A"/>
    <property type="match status" value="1"/>
</dbReference>
<dbReference type="Gene3D" id="3.30.70.260">
    <property type="match status" value="1"/>
</dbReference>
<dbReference type="Gene3D" id="3.40.50.1360">
    <property type="match status" value="1"/>
</dbReference>
<dbReference type="HAMAP" id="MF_00170">
    <property type="entry name" value="Rib_5P_isom_A"/>
    <property type="match status" value="1"/>
</dbReference>
<dbReference type="InterPro" id="IPR037171">
    <property type="entry name" value="NagB/RpiA_transferase-like"/>
</dbReference>
<dbReference type="InterPro" id="IPR020672">
    <property type="entry name" value="Ribose5P_isomerase_typA_subgr"/>
</dbReference>
<dbReference type="InterPro" id="IPR004788">
    <property type="entry name" value="Ribose5P_isomerase_type_A"/>
</dbReference>
<dbReference type="NCBIfam" id="NF001924">
    <property type="entry name" value="PRK00702.1"/>
    <property type="match status" value="1"/>
</dbReference>
<dbReference type="NCBIfam" id="TIGR00021">
    <property type="entry name" value="rpiA"/>
    <property type="match status" value="1"/>
</dbReference>
<dbReference type="PANTHER" id="PTHR11934">
    <property type="entry name" value="RIBOSE-5-PHOSPHATE ISOMERASE"/>
    <property type="match status" value="1"/>
</dbReference>
<dbReference type="PANTHER" id="PTHR11934:SF0">
    <property type="entry name" value="RIBOSE-5-PHOSPHATE ISOMERASE"/>
    <property type="match status" value="1"/>
</dbReference>
<dbReference type="Pfam" id="PF06026">
    <property type="entry name" value="Rib_5-P_isom_A"/>
    <property type="match status" value="1"/>
</dbReference>
<dbReference type="SUPFAM" id="SSF75445">
    <property type="entry name" value="D-ribose-5-phosphate isomerase (RpiA), lid domain"/>
    <property type="match status" value="1"/>
</dbReference>
<dbReference type="SUPFAM" id="SSF100950">
    <property type="entry name" value="NagB/RpiA/CoA transferase-like"/>
    <property type="match status" value="1"/>
</dbReference>
<feature type="chain" id="PRO_0000158490" description="Ribose-5-phosphate isomerase A">
    <location>
        <begin position="1"/>
        <end position="218"/>
    </location>
</feature>
<feature type="active site" description="Proton acceptor" evidence="1">
    <location>
        <position position="103"/>
    </location>
</feature>
<feature type="binding site" evidence="1">
    <location>
        <begin position="28"/>
        <end position="31"/>
    </location>
    <ligand>
        <name>substrate</name>
    </ligand>
</feature>
<feature type="binding site" evidence="1">
    <location>
        <begin position="81"/>
        <end position="84"/>
    </location>
    <ligand>
        <name>substrate</name>
    </ligand>
</feature>
<feature type="binding site" evidence="1">
    <location>
        <begin position="94"/>
        <end position="97"/>
    </location>
    <ligand>
        <name>substrate</name>
    </ligand>
</feature>
<feature type="binding site" evidence="1">
    <location>
        <position position="121"/>
    </location>
    <ligand>
        <name>substrate</name>
    </ligand>
</feature>
<evidence type="ECO:0000255" key="1">
    <source>
        <dbReference type="HAMAP-Rule" id="MF_00170"/>
    </source>
</evidence>
<gene>
    <name evidence="1" type="primary">rpiA</name>
    <name type="ordered locus">VC_2480</name>
</gene>
<proteinExistence type="inferred from homology"/>
<sequence>MTQDEMKKAAGWAALKYVEKGSIVGVGTGSTVNHFIDALGTIKDEIKGAVSSSIASTAKLEALGIRVYDCNDVSELDIYVDGADEINPERDMIKGGGAALTREKIVAAIAKKFVCIVDGTKAVDVLGNFPLPVEVIPMARSYVARELVKLGGDPVYREGVITDNGNVILDVYNMKITHPKDLESKINGIAGVVTVGLFAHRGADVVITGTPQGAKIEE</sequence>
<keyword id="KW-0413">Isomerase</keyword>
<keyword id="KW-1185">Reference proteome</keyword>
<organism>
    <name type="scientific">Vibrio cholerae serotype O1 (strain ATCC 39315 / El Tor Inaba N16961)</name>
    <dbReference type="NCBI Taxonomy" id="243277"/>
    <lineage>
        <taxon>Bacteria</taxon>
        <taxon>Pseudomonadati</taxon>
        <taxon>Pseudomonadota</taxon>
        <taxon>Gammaproteobacteria</taxon>
        <taxon>Vibrionales</taxon>
        <taxon>Vibrionaceae</taxon>
        <taxon>Vibrio</taxon>
    </lineage>
</organism>
<protein>
    <recommendedName>
        <fullName evidence="1">Ribose-5-phosphate isomerase A</fullName>
        <ecNumber evidence="1">5.3.1.6</ecNumber>
    </recommendedName>
    <alternativeName>
        <fullName evidence="1">Phosphoriboisomerase A</fullName>
        <shortName evidence="1">PRI</shortName>
    </alternativeName>
</protein>
<name>RPIA_VIBCH</name>